<organism>
    <name type="scientific">Streptomyces coelicolor (strain ATCC BAA-471 / A3(2) / M145)</name>
    <dbReference type="NCBI Taxonomy" id="100226"/>
    <lineage>
        <taxon>Bacteria</taxon>
        <taxon>Bacillati</taxon>
        <taxon>Actinomycetota</taxon>
        <taxon>Actinomycetes</taxon>
        <taxon>Kitasatosporales</taxon>
        <taxon>Streptomycetaceae</taxon>
        <taxon>Streptomyces</taxon>
        <taxon>Streptomyces albidoflavus group</taxon>
    </lineage>
</organism>
<gene>
    <name type="primary">hemB</name>
    <name type="ordered locus">SCO3311</name>
    <name type="ORF">SCE68.09c</name>
</gene>
<reference key="1">
    <citation type="submission" date="1995-01" db="EMBL/GenBank/DDBJ databases">
        <title>Cloning and characterisation of the genes that encode enzymes for first steps of tetrapyrrole biosynthesis in Streptomyces coelicolor A3(2).</title>
        <authorList>
            <person name="Petricek M."/>
        </authorList>
    </citation>
    <scope>NUCLEOTIDE SEQUENCE [GENOMIC DNA]</scope>
    <source>
        <strain>A3(2) / NRRL B-16638</strain>
    </source>
</reference>
<reference key="2">
    <citation type="journal article" date="2002" name="Nature">
        <title>Complete genome sequence of the model actinomycete Streptomyces coelicolor A3(2).</title>
        <authorList>
            <person name="Bentley S.D."/>
            <person name="Chater K.F."/>
            <person name="Cerdeno-Tarraga A.-M."/>
            <person name="Challis G.L."/>
            <person name="Thomson N.R."/>
            <person name="James K.D."/>
            <person name="Harris D.E."/>
            <person name="Quail M.A."/>
            <person name="Kieser H."/>
            <person name="Harper D."/>
            <person name="Bateman A."/>
            <person name="Brown S."/>
            <person name="Chandra G."/>
            <person name="Chen C.W."/>
            <person name="Collins M."/>
            <person name="Cronin A."/>
            <person name="Fraser A."/>
            <person name="Goble A."/>
            <person name="Hidalgo J."/>
            <person name="Hornsby T."/>
            <person name="Howarth S."/>
            <person name="Huang C.-H."/>
            <person name="Kieser T."/>
            <person name="Larke L."/>
            <person name="Murphy L.D."/>
            <person name="Oliver K."/>
            <person name="O'Neil S."/>
            <person name="Rabbinowitsch E."/>
            <person name="Rajandream M.A."/>
            <person name="Rutherford K.M."/>
            <person name="Rutter S."/>
            <person name="Seeger K."/>
            <person name="Saunders D."/>
            <person name="Sharp S."/>
            <person name="Squares R."/>
            <person name="Squares S."/>
            <person name="Taylor K."/>
            <person name="Warren T."/>
            <person name="Wietzorrek A."/>
            <person name="Woodward J.R."/>
            <person name="Barrell B.G."/>
            <person name="Parkhill J."/>
            <person name="Hopwood D.A."/>
        </authorList>
    </citation>
    <scope>NUCLEOTIDE SEQUENCE [LARGE SCALE GENOMIC DNA]</scope>
    <source>
        <strain>ATCC BAA-471 / A3(2) / M145</strain>
    </source>
</reference>
<feature type="chain" id="PRO_0000140519" description="Delta-aminolevulinic acid dehydratase">
    <location>
        <begin position="1"/>
        <end position="330"/>
    </location>
</feature>
<feature type="active site" description="Schiff-base intermediate with substrate" evidence="1">
    <location>
        <position position="203"/>
    </location>
</feature>
<feature type="active site" description="Schiff-base intermediate with substrate" evidence="1">
    <location>
        <position position="255"/>
    </location>
</feature>
<feature type="binding site" evidence="1">
    <location>
        <position position="213"/>
    </location>
    <ligand>
        <name>5-aminolevulinate</name>
        <dbReference type="ChEBI" id="CHEBI:356416"/>
        <label>1</label>
    </ligand>
</feature>
<feature type="binding site" evidence="1">
    <location>
        <position position="224"/>
    </location>
    <ligand>
        <name>5-aminolevulinate</name>
        <dbReference type="ChEBI" id="CHEBI:356416"/>
        <label>1</label>
    </ligand>
</feature>
<feature type="binding site" evidence="1">
    <location>
        <position position="240"/>
    </location>
    <ligand>
        <name>Mg(2+)</name>
        <dbReference type="ChEBI" id="CHEBI:18420"/>
    </ligand>
</feature>
<feature type="binding site" evidence="1">
    <location>
        <position position="281"/>
    </location>
    <ligand>
        <name>5-aminolevulinate</name>
        <dbReference type="ChEBI" id="CHEBI:356416"/>
        <label>2</label>
    </ligand>
</feature>
<feature type="binding site" evidence="1">
    <location>
        <position position="320"/>
    </location>
    <ligand>
        <name>5-aminolevulinate</name>
        <dbReference type="ChEBI" id="CHEBI:356416"/>
        <label>2</label>
    </ligand>
</feature>
<feature type="sequence conflict" description="In Ref. 1; AAA61398." evidence="2" ref="1">
    <original>D</original>
    <variation>V</variation>
    <location>
        <position position="100"/>
    </location>
</feature>
<name>HEM2_STRCO</name>
<protein>
    <recommendedName>
        <fullName>Delta-aminolevulinic acid dehydratase</fullName>
        <shortName>ALAD</shortName>
        <shortName>ALADH</shortName>
        <ecNumber>4.2.1.24</ecNumber>
    </recommendedName>
    <alternativeName>
        <fullName>Porphobilinogen synthase</fullName>
    </alternativeName>
</protein>
<comment type="function">
    <text evidence="1">Catalyzes an early step in the biosynthesis of tetrapyrroles. Binds two molecules of 5-aminolevulinate per subunit, each at a distinct site, and catalyzes their condensation to form porphobilinogen (By similarity).</text>
</comment>
<comment type="catalytic activity">
    <reaction>
        <text>2 5-aminolevulinate = porphobilinogen + 2 H2O + H(+)</text>
        <dbReference type="Rhea" id="RHEA:24064"/>
        <dbReference type="ChEBI" id="CHEBI:15377"/>
        <dbReference type="ChEBI" id="CHEBI:15378"/>
        <dbReference type="ChEBI" id="CHEBI:58126"/>
        <dbReference type="ChEBI" id="CHEBI:356416"/>
        <dbReference type="EC" id="4.2.1.24"/>
    </reaction>
</comment>
<comment type="pathway">
    <text>Porphyrin-containing compound metabolism; protoporphyrin-IX biosynthesis; coproporphyrinogen-III from 5-aminolevulinate: step 1/4.</text>
</comment>
<comment type="subunit">
    <text evidence="1">Homooctamer.</text>
</comment>
<comment type="similarity">
    <text evidence="2">Belongs to the ALAD family.</text>
</comment>
<evidence type="ECO:0000250" key="1"/>
<evidence type="ECO:0000305" key="2"/>
<keyword id="KW-0350">Heme biosynthesis</keyword>
<keyword id="KW-0456">Lyase</keyword>
<keyword id="KW-0460">Magnesium</keyword>
<keyword id="KW-0479">Metal-binding</keyword>
<keyword id="KW-0627">Porphyrin biosynthesis</keyword>
<keyword id="KW-1185">Reference proteome</keyword>
<dbReference type="EC" id="4.2.1.24"/>
<dbReference type="EMBL" id="U19249">
    <property type="protein sequence ID" value="AAA61398.1"/>
    <property type="molecule type" value="Genomic_DNA"/>
</dbReference>
<dbReference type="EMBL" id="AL939116">
    <property type="protein sequence ID" value="CAB45345.1"/>
    <property type="molecule type" value="Genomic_DNA"/>
</dbReference>
<dbReference type="PIR" id="T36259">
    <property type="entry name" value="T36259"/>
</dbReference>
<dbReference type="RefSeq" id="NP_627521.1">
    <property type="nucleotide sequence ID" value="NC_003888.3"/>
</dbReference>
<dbReference type="RefSeq" id="WP_011028903.1">
    <property type="nucleotide sequence ID" value="NZ_VNID01000025.1"/>
</dbReference>
<dbReference type="SMR" id="P54919"/>
<dbReference type="FunCoup" id="P54919">
    <property type="interactions" value="476"/>
</dbReference>
<dbReference type="STRING" id="100226.gene:17760930"/>
<dbReference type="ChEMBL" id="CHEMBL3308959"/>
<dbReference type="PaxDb" id="100226-SCO3311"/>
<dbReference type="GeneID" id="91385651"/>
<dbReference type="KEGG" id="sco:SCO3311"/>
<dbReference type="PATRIC" id="fig|100226.15.peg.3371"/>
<dbReference type="eggNOG" id="COG0113">
    <property type="taxonomic scope" value="Bacteria"/>
</dbReference>
<dbReference type="HOGENOM" id="CLU_035731_0_0_11"/>
<dbReference type="InParanoid" id="P54919"/>
<dbReference type="OrthoDB" id="9805001at2"/>
<dbReference type="PhylomeDB" id="P54919"/>
<dbReference type="UniPathway" id="UPA00251">
    <property type="reaction ID" value="UER00318"/>
</dbReference>
<dbReference type="Proteomes" id="UP000001973">
    <property type="component" value="Chromosome"/>
</dbReference>
<dbReference type="GO" id="GO:0005829">
    <property type="term" value="C:cytosol"/>
    <property type="evidence" value="ECO:0000318"/>
    <property type="project" value="GO_Central"/>
</dbReference>
<dbReference type="GO" id="GO:0004655">
    <property type="term" value="F:porphobilinogen synthase activity"/>
    <property type="evidence" value="ECO:0000318"/>
    <property type="project" value="GO_Central"/>
</dbReference>
<dbReference type="GO" id="GO:0008270">
    <property type="term" value="F:zinc ion binding"/>
    <property type="evidence" value="ECO:0000318"/>
    <property type="project" value="GO_Central"/>
</dbReference>
<dbReference type="GO" id="GO:0006783">
    <property type="term" value="P:heme biosynthetic process"/>
    <property type="evidence" value="ECO:0000318"/>
    <property type="project" value="GO_Central"/>
</dbReference>
<dbReference type="GO" id="GO:0006782">
    <property type="term" value="P:protoporphyrinogen IX biosynthetic process"/>
    <property type="evidence" value="ECO:0007669"/>
    <property type="project" value="UniProtKB-UniPathway"/>
</dbReference>
<dbReference type="CDD" id="cd00384">
    <property type="entry name" value="ALAD_PBGS"/>
    <property type="match status" value="1"/>
</dbReference>
<dbReference type="FunFam" id="3.20.20.70:FF:000019">
    <property type="entry name" value="Delta-aminolevulinic acid dehydratase"/>
    <property type="match status" value="1"/>
</dbReference>
<dbReference type="Gene3D" id="3.20.20.70">
    <property type="entry name" value="Aldolase class I"/>
    <property type="match status" value="1"/>
</dbReference>
<dbReference type="InterPro" id="IPR001731">
    <property type="entry name" value="ALAD"/>
</dbReference>
<dbReference type="InterPro" id="IPR030656">
    <property type="entry name" value="ALAD_AS"/>
</dbReference>
<dbReference type="InterPro" id="IPR013785">
    <property type="entry name" value="Aldolase_TIM"/>
</dbReference>
<dbReference type="NCBIfam" id="NF006762">
    <property type="entry name" value="PRK09283.1"/>
    <property type="match status" value="1"/>
</dbReference>
<dbReference type="PANTHER" id="PTHR11458">
    <property type="entry name" value="DELTA-AMINOLEVULINIC ACID DEHYDRATASE"/>
    <property type="match status" value="1"/>
</dbReference>
<dbReference type="PANTHER" id="PTHR11458:SF0">
    <property type="entry name" value="DELTA-AMINOLEVULINIC ACID DEHYDRATASE"/>
    <property type="match status" value="1"/>
</dbReference>
<dbReference type="Pfam" id="PF00490">
    <property type="entry name" value="ALAD"/>
    <property type="match status" value="1"/>
</dbReference>
<dbReference type="PIRSF" id="PIRSF001415">
    <property type="entry name" value="Porphbilin_synth"/>
    <property type="match status" value="1"/>
</dbReference>
<dbReference type="PRINTS" id="PR00144">
    <property type="entry name" value="DALDHYDRTASE"/>
</dbReference>
<dbReference type="SMART" id="SM01004">
    <property type="entry name" value="ALAD"/>
    <property type="match status" value="1"/>
</dbReference>
<dbReference type="SUPFAM" id="SSF51569">
    <property type="entry name" value="Aldolase"/>
    <property type="match status" value="1"/>
</dbReference>
<dbReference type="PROSITE" id="PS00169">
    <property type="entry name" value="D_ALA_DEHYDRATASE"/>
    <property type="match status" value="1"/>
</dbReference>
<proteinExistence type="inferred from homology"/>
<sequence>MTTYGSFPGARPRRLRTTPVMRRMVAETRLHPADFILPAFVREGVSEPVPIAAMPGVVQHTRDTLKKAAAEAVEAGVSGIMLFGVPEDGKKDAAGTAGTDPDGILQVALRDVRAEVGDELLVMSDLCLDEFTDHGHCGVLDGQGRVDNDATLERYAEMAQVQADAGAHVVGPSGMMDGQIGVIRDALDQIGREDVAILAYTAKYASAFYGPFREAVGSSLKGDRKTYQQDSANARESLRELALDLEEGADMVMVKPAGPYLDILAKVAEASDVPVAAYQISGEYSMIEAAAEKGWIDRDRAILESLTGIKRAGARNILTYWATEVARTLR</sequence>
<accession>P54919</accession>
<accession>Q9S2E6</accession>